<accession>O29013</accession>
<gene>
    <name type="primary">argF</name>
    <name type="ordered locus">AF_1255</name>
</gene>
<name>OTC_ARCFU</name>
<dbReference type="EC" id="2.1.3.3"/>
<dbReference type="EMBL" id="AE000782">
    <property type="protein sequence ID" value="AAB89987.1"/>
    <property type="molecule type" value="Genomic_DNA"/>
</dbReference>
<dbReference type="PIR" id="F69406">
    <property type="entry name" value="F69406"/>
</dbReference>
<dbReference type="RefSeq" id="WP_010878750.1">
    <property type="nucleotide sequence ID" value="NC_000917.1"/>
</dbReference>
<dbReference type="SMR" id="O29013"/>
<dbReference type="STRING" id="224325.AF_1255"/>
<dbReference type="PaxDb" id="224325-AF_1255"/>
<dbReference type="EnsemblBacteria" id="AAB89987">
    <property type="protein sequence ID" value="AAB89987"/>
    <property type="gene ID" value="AF_1255"/>
</dbReference>
<dbReference type="GeneID" id="24794858"/>
<dbReference type="KEGG" id="afu:AF_1255"/>
<dbReference type="eggNOG" id="arCOG00912">
    <property type="taxonomic scope" value="Archaea"/>
</dbReference>
<dbReference type="HOGENOM" id="CLU_043846_3_2_2"/>
<dbReference type="OrthoDB" id="4696at2157"/>
<dbReference type="PhylomeDB" id="O29013"/>
<dbReference type="UniPathway" id="UPA00068">
    <property type="reaction ID" value="UER00112"/>
</dbReference>
<dbReference type="Proteomes" id="UP000002199">
    <property type="component" value="Chromosome"/>
</dbReference>
<dbReference type="GO" id="GO:0005737">
    <property type="term" value="C:cytoplasm"/>
    <property type="evidence" value="ECO:0007669"/>
    <property type="project" value="UniProtKB-SubCell"/>
</dbReference>
<dbReference type="GO" id="GO:0016597">
    <property type="term" value="F:amino acid binding"/>
    <property type="evidence" value="ECO:0007669"/>
    <property type="project" value="InterPro"/>
</dbReference>
<dbReference type="GO" id="GO:0004585">
    <property type="term" value="F:ornithine carbamoyltransferase activity"/>
    <property type="evidence" value="ECO:0007669"/>
    <property type="project" value="UniProtKB-UniRule"/>
</dbReference>
<dbReference type="GO" id="GO:0042450">
    <property type="term" value="P:arginine biosynthetic process via ornithine"/>
    <property type="evidence" value="ECO:0007669"/>
    <property type="project" value="TreeGrafter"/>
</dbReference>
<dbReference type="GO" id="GO:0019240">
    <property type="term" value="P:citrulline biosynthetic process"/>
    <property type="evidence" value="ECO:0007669"/>
    <property type="project" value="TreeGrafter"/>
</dbReference>
<dbReference type="GO" id="GO:0006526">
    <property type="term" value="P:L-arginine biosynthetic process"/>
    <property type="evidence" value="ECO:0007669"/>
    <property type="project" value="UniProtKB-UniRule"/>
</dbReference>
<dbReference type="FunFam" id="3.40.50.1370:FF:000008">
    <property type="entry name" value="Ornithine carbamoyltransferase"/>
    <property type="match status" value="1"/>
</dbReference>
<dbReference type="Gene3D" id="3.40.50.1370">
    <property type="entry name" value="Aspartate/ornithine carbamoyltransferase"/>
    <property type="match status" value="2"/>
</dbReference>
<dbReference type="HAMAP" id="MF_01109">
    <property type="entry name" value="OTCase"/>
    <property type="match status" value="1"/>
</dbReference>
<dbReference type="InterPro" id="IPR006132">
    <property type="entry name" value="Asp/Orn_carbamoyltranf_P-bd"/>
</dbReference>
<dbReference type="InterPro" id="IPR006130">
    <property type="entry name" value="Asp/Orn_carbamoylTrfase"/>
</dbReference>
<dbReference type="InterPro" id="IPR036901">
    <property type="entry name" value="Asp/Orn_carbamoylTrfase_sf"/>
</dbReference>
<dbReference type="InterPro" id="IPR006131">
    <property type="entry name" value="Asp_carbamoyltransf_Asp/Orn-bd"/>
</dbReference>
<dbReference type="InterPro" id="IPR002292">
    <property type="entry name" value="Orn/put_carbamltrans"/>
</dbReference>
<dbReference type="InterPro" id="IPR024904">
    <property type="entry name" value="OTCase_ArgI"/>
</dbReference>
<dbReference type="NCBIfam" id="TIGR00658">
    <property type="entry name" value="orni_carb_tr"/>
    <property type="match status" value="1"/>
</dbReference>
<dbReference type="NCBIfam" id="NF001986">
    <property type="entry name" value="PRK00779.1"/>
    <property type="match status" value="1"/>
</dbReference>
<dbReference type="PANTHER" id="PTHR45753">
    <property type="entry name" value="ORNITHINE CARBAMOYLTRANSFERASE, MITOCHONDRIAL"/>
    <property type="match status" value="1"/>
</dbReference>
<dbReference type="PANTHER" id="PTHR45753:SF3">
    <property type="entry name" value="ORNITHINE TRANSCARBAMYLASE, MITOCHONDRIAL"/>
    <property type="match status" value="1"/>
</dbReference>
<dbReference type="Pfam" id="PF00185">
    <property type="entry name" value="OTCace"/>
    <property type="match status" value="1"/>
</dbReference>
<dbReference type="Pfam" id="PF02729">
    <property type="entry name" value="OTCace_N"/>
    <property type="match status" value="1"/>
</dbReference>
<dbReference type="PRINTS" id="PR00100">
    <property type="entry name" value="AOTCASE"/>
</dbReference>
<dbReference type="PRINTS" id="PR00102">
    <property type="entry name" value="OTCASE"/>
</dbReference>
<dbReference type="SUPFAM" id="SSF53671">
    <property type="entry name" value="Aspartate/ornithine carbamoyltransferase"/>
    <property type="match status" value="1"/>
</dbReference>
<reference key="1">
    <citation type="journal article" date="1997" name="Nature">
        <title>The complete genome sequence of the hyperthermophilic, sulphate-reducing archaeon Archaeoglobus fulgidus.</title>
        <authorList>
            <person name="Klenk H.-P."/>
            <person name="Clayton R.A."/>
            <person name="Tomb J.-F."/>
            <person name="White O."/>
            <person name="Nelson K.E."/>
            <person name="Ketchum K.A."/>
            <person name="Dodson R.J."/>
            <person name="Gwinn M.L."/>
            <person name="Hickey E.K."/>
            <person name="Peterson J.D."/>
            <person name="Richardson D.L."/>
            <person name="Kerlavage A.R."/>
            <person name="Graham D.E."/>
            <person name="Kyrpides N.C."/>
            <person name="Fleischmann R.D."/>
            <person name="Quackenbush J."/>
            <person name="Lee N.H."/>
            <person name="Sutton G.G."/>
            <person name="Gill S.R."/>
            <person name="Kirkness E.F."/>
            <person name="Dougherty B.A."/>
            <person name="McKenney K."/>
            <person name="Adams M.D."/>
            <person name="Loftus B.J."/>
            <person name="Peterson S.N."/>
            <person name="Reich C.I."/>
            <person name="McNeil L.K."/>
            <person name="Badger J.H."/>
            <person name="Glodek A."/>
            <person name="Zhou L."/>
            <person name="Overbeek R."/>
            <person name="Gocayne J.D."/>
            <person name="Weidman J.F."/>
            <person name="McDonald L.A."/>
            <person name="Utterback T.R."/>
            <person name="Cotton M.D."/>
            <person name="Spriggs T."/>
            <person name="Artiach P."/>
            <person name="Kaine B.P."/>
            <person name="Sykes S.M."/>
            <person name="Sadow P.W."/>
            <person name="D'Andrea K.P."/>
            <person name="Bowman C."/>
            <person name="Fujii C."/>
            <person name="Garland S.A."/>
            <person name="Mason T.M."/>
            <person name="Olsen G.J."/>
            <person name="Fraser C.M."/>
            <person name="Smith H.O."/>
            <person name="Woese C.R."/>
            <person name="Venter J.C."/>
        </authorList>
    </citation>
    <scope>NUCLEOTIDE SEQUENCE [LARGE SCALE GENOMIC DNA]</scope>
    <source>
        <strain>ATCC 49558 / DSM 4304 / JCM 9628 / NBRC 100126 / VC-16</strain>
    </source>
</reference>
<keyword id="KW-0028">Amino-acid biosynthesis</keyword>
<keyword id="KW-0055">Arginine biosynthesis</keyword>
<keyword id="KW-0963">Cytoplasm</keyword>
<keyword id="KW-1185">Reference proteome</keyword>
<keyword id="KW-0808">Transferase</keyword>
<sequence length="307" mass="34913">MKHLLSMADLEKDELFEILKLAEKLKEERYKGVVTDYLKNKSLAMIFELPSTRTRVSFEVAMTDLGGHALYLGWDELQLGRGEPIKDTARVLSRYVHAVMMRVREHSTIEEFARYSTVPVINGLSNLEHPCQVIADLLTIYEYRGDFKDVTLAWVGDGNNVCNSMILAAALTGMKMVISTPENYDPNPEIVKKAEEMGAKLRFVRDPKEAVKEADVIYTDVWTSMGQEAEKEARLKAFQPYQVSDELLKFSKDDVVVMHCLPAHRGEEITDEVMEGKHSIVFDQAENRLHAQKAILLKLLGKESEVY</sequence>
<comment type="function">
    <text evidence="1">Reversibly catalyzes the transfer of the carbamoyl group from carbamoyl phosphate (CP) to the N(epsilon) atom of ornithine (ORN) to produce L-citrulline.</text>
</comment>
<comment type="catalytic activity">
    <reaction>
        <text>carbamoyl phosphate + L-ornithine = L-citrulline + phosphate + H(+)</text>
        <dbReference type="Rhea" id="RHEA:19513"/>
        <dbReference type="ChEBI" id="CHEBI:15378"/>
        <dbReference type="ChEBI" id="CHEBI:43474"/>
        <dbReference type="ChEBI" id="CHEBI:46911"/>
        <dbReference type="ChEBI" id="CHEBI:57743"/>
        <dbReference type="ChEBI" id="CHEBI:58228"/>
        <dbReference type="EC" id="2.1.3.3"/>
    </reaction>
</comment>
<comment type="pathway">
    <text>Amino-acid biosynthesis; L-arginine biosynthesis; L-arginine from L-ornithine and carbamoyl phosphate: step 1/3.</text>
</comment>
<comment type="subcellular location">
    <subcellularLocation>
        <location evidence="1">Cytoplasm</location>
    </subcellularLocation>
</comment>
<comment type="similarity">
    <text evidence="3">Belongs to the aspartate/ornithine carbamoyltransferase superfamily. OTCase family.</text>
</comment>
<protein>
    <recommendedName>
        <fullName>Ornithine carbamoyltransferase</fullName>
        <shortName>OTCase</shortName>
        <ecNumber>2.1.3.3</ecNumber>
    </recommendedName>
</protein>
<evidence type="ECO:0000250" key="1"/>
<evidence type="ECO:0000255" key="2">
    <source>
        <dbReference type="HAMAP-Rule" id="MF_01109"/>
    </source>
</evidence>
<evidence type="ECO:0000305" key="3"/>
<feature type="chain" id="PRO_0000113062" description="Ornithine carbamoyltransferase">
    <location>
        <begin position="1"/>
        <end position="307"/>
    </location>
</feature>
<feature type="binding site" evidence="2">
    <location>
        <begin position="51"/>
        <end position="54"/>
    </location>
    <ligand>
        <name>carbamoyl phosphate</name>
        <dbReference type="ChEBI" id="CHEBI:58228"/>
    </ligand>
</feature>
<feature type="binding site" evidence="2">
    <location>
        <position position="78"/>
    </location>
    <ligand>
        <name>carbamoyl phosphate</name>
        <dbReference type="ChEBI" id="CHEBI:58228"/>
    </ligand>
</feature>
<feature type="binding site" evidence="2">
    <location>
        <position position="102"/>
    </location>
    <ligand>
        <name>carbamoyl phosphate</name>
        <dbReference type="ChEBI" id="CHEBI:58228"/>
    </ligand>
</feature>
<feature type="binding site" evidence="2">
    <location>
        <begin position="129"/>
        <end position="132"/>
    </location>
    <ligand>
        <name>carbamoyl phosphate</name>
        <dbReference type="ChEBI" id="CHEBI:58228"/>
    </ligand>
</feature>
<feature type="binding site" evidence="2">
    <location>
        <position position="160"/>
    </location>
    <ligand>
        <name>L-ornithine</name>
        <dbReference type="ChEBI" id="CHEBI:46911"/>
    </ligand>
</feature>
<feature type="binding site" evidence="2">
    <location>
        <position position="220"/>
    </location>
    <ligand>
        <name>L-ornithine</name>
        <dbReference type="ChEBI" id="CHEBI:46911"/>
    </ligand>
</feature>
<feature type="binding site" evidence="2">
    <location>
        <begin position="224"/>
        <end position="225"/>
    </location>
    <ligand>
        <name>L-ornithine</name>
        <dbReference type="ChEBI" id="CHEBI:46911"/>
    </ligand>
</feature>
<feature type="binding site" evidence="2">
    <location>
        <begin position="260"/>
        <end position="261"/>
    </location>
    <ligand>
        <name>carbamoyl phosphate</name>
        <dbReference type="ChEBI" id="CHEBI:58228"/>
    </ligand>
</feature>
<feature type="binding site" evidence="2">
    <location>
        <position position="288"/>
    </location>
    <ligand>
        <name>carbamoyl phosphate</name>
        <dbReference type="ChEBI" id="CHEBI:58228"/>
    </ligand>
</feature>
<proteinExistence type="inferred from homology"/>
<organism>
    <name type="scientific">Archaeoglobus fulgidus (strain ATCC 49558 / DSM 4304 / JCM 9628 / NBRC 100126 / VC-16)</name>
    <dbReference type="NCBI Taxonomy" id="224325"/>
    <lineage>
        <taxon>Archaea</taxon>
        <taxon>Methanobacteriati</taxon>
        <taxon>Methanobacteriota</taxon>
        <taxon>Archaeoglobi</taxon>
        <taxon>Archaeoglobales</taxon>
        <taxon>Archaeoglobaceae</taxon>
        <taxon>Archaeoglobus</taxon>
    </lineage>
</organism>